<protein>
    <recommendedName>
        <fullName evidence="1">Shikimate kinase</fullName>
        <shortName evidence="1">SK</shortName>
        <ecNumber evidence="1">2.7.1.71</ecNumber>
    </recommendedName>
</protein>
<organism>
    <name type="scientific">Prochlorococcus marinus (strain SARG / CCMP1375 / SS120)</name>
    <dbReference type="NCBI Taxonomy" id="167539"/>
    <lineage>
        <taxon>Bacteria</taxon>
        <taxon>Bacillati</taxon>
        <taxon>Cyanobacteriota</taxon>
        <taxon>Cyanophyceae</taxon>
        <taxon>Synechococcales</taxon>
        <taxon>Prochlorococcaceae</taxon>
        <taxon>Prochlorococcus</taxon>
    </lineage>
</organism>
<accession>Q7VE85</accession>
<proteinExistence type="inferred from homology"/>
<dbReference type="EC" id="2.7.1.71" evidence="1"/>
<dbReference type="EMBL" id="AE017126">
    <property type="protein sequence ID" value="AAP99174.1"/>
    <property type="molecule type" value="Genomic_DNA"/>
</dbReference>
<dbReference type="RefSeq" id="NP_874522.1">
    <property type="nucleotide sequence ID" value="NC_005042.1"/>
</dbReference>
<dbReference type="RefSeq" id="WP_011124283.1">
    <property type="nucleotide sequence ID" value="NC_005042.1"/>
</dbReference>
<dbReference type="SMR" id="Q7VE85"/>
<dbReference type="STRING" id="167539.Pro_0128"/>
<dbReference type="EnsemblBacteria" id="AAP99174">
    <property type="protein sequence ID" value="AAP99174"/>
    <property type="gene ID" value="Pro_0128"/>
</dbReference>
<dbReference type="KEGG" id="pma:Pro_0128"/>
<dbReference type="PATRIC" id="fig|167539.5.peg.134"/>
<dbReference type="eggNOG" id="COG0703">
    <property type="taxonomic scope" value="Bacteria"/>
</dbReference>
<dbReference type="HOGENOM" id="CLU_057607_2_3_3"/>
<dbReference type="OrthoDB" id="9800332at2"/>
<dbReference type="UniPathway" id="UPA00053">
    <property type="reaction ID" value="UER00088"/>
</dbReference>
<dbReference type="Proteomes" id="UP000001420">
    <property type="component" value="Chromosome"/>
</dbReference>
<dbReference type="GO" id="GO:0005829">
    <property type="term" value="C:cytosol"/>
    <property type="evidence" value="ECO:0007669"/>
    <property type="project" value="TreeGrafter"/>
</dbReference>
<dbReference type="GO" id="GO:0005524">
    <property type="term" value="F:ATP binding"/>
    <property type="evidence" value="ECO:0007669"/>
    <property type="project" value="UniProtKB-UniRule"/>
</dbReference>
<dbReference type="GO" id="GO:0000287">
    <property type="term" value="F:magnesium ion binding"/>
    <property type="evidence" value="ECO:0007669"/>
    <property type="project" value="UniProtKB-UniRule"/>
</dbReference>
<dbReference type="GO" id="GO:0004765">
    <property type="term" value="F:shikimate kinase activity"/>
    <property type="evidence" value="ECO:0007669"/>
    <property type="project" value="UniProtKB-UniRule"/>
</dbReference>
<dbReference type="GO" id="GO:0008652">
    <property type="term" value="P:amino acid biosynthetic process"/>
    <property type="evidence" value="ECO:0007669"/>
    <property type="project" value="UniProtKB-KW"/>
</dbReference>
<dbReference type="GO" id="GO:0009073">
    <property type="term" value="P:aromatic amino acid family biosynthetic process"/>
    <property type="evidence" value="ECO:0007669"/>
    <property type="project" value="UniProtKB-KW"/>
</dbReference>
<dbReference type="GO" id="GO:0009423">
    <property type="term" value="P:chorismate biosynthetic process"/>
    <property type="evidence" value="ECO:0007669"/>
    <property type="project" value="UniProtKB-UniRule"/>
</dbReference>
<dbReference type="CDD" id="cd00464">
    <property type="entry name" value="SK"/>
    <property type="match status" value="1"/>
</dbReference>
<dbReference type="Gene3D" id="3.40.50.300">
    <property type="entry name" value="P-loop containing nucleotide triphosphate hydrolases"/>
    <property type="match status" value="1"/>
</dbReference>
<dbReference type="HAMAP" id="MF_00109">
    <property type="entry name" value="Shikimate_kinase"/>
    <property type="match status" value="1"/>
</dbReference>
<dbReference type="InterPro" id="IPR027417">
    <property type="entry name" value="P-loop_NTPase"/>
</dbReference>
<dbReference type="InterPro" id="IPR031322">
    <property type="entry name" value="Shikimate/glucono_kinase"/>
</dbReference>
<dbReference type="InterPro" id="IPR000623">
    <property type="entry name" value="Shikimate_kinase/TSH1"/>
</dbReference>
<dbReference type="InterPro" id="IPR023000">
    <property type="entry name" value="Shikimate_kinase_CS"/>
</dbReference>
<dbReference type="PANTHER" id="PTHR21087">
    <property type="entry name" value="SHIKIMATE KINASE"/>
    <property type="match status" value="1"/>
</dbReference>
<dbReference type="PANTHER" id="PTHR21087:SF16">
    <property type="entry name" value="SHIKIMATE KINASE 1, CHLOROPLASTIC"/>
    <property type="match status" value="1"/>
</dbReference>
<dbReference type="Pfam" id="PF01202">
    <property type="entry name" value="SKI"/>
    <property type="match status" value="1"/>
</dbReference>
<dbReference type="PRINTS" id="PR01100">
    <property type="entry name" value="SHIKIMTKNASE"/>
</dbReference>
<dbReference type="SUPFAM" id="SSF52540">
    <property type="entry name" value="P-loop containing nucleoside triphosphate hydrolases"/>
    <property type="match status" value="1"/>
</dbReference>
<dbReference type="PROSITE" id="PS01128">
    <property type="entry name" value="SHIKIMATE_KINASE"/>
    <property type="match status" value="1"/>
</dbReference>
<keyword id="KW-0028">Amino-acid biosynthesis</keyword>
<keyword id="KW-0057">Aromatic amino acid biosynthesis</keyword>
<keyword id="KW-0067">ATP-binding</keyword>
<keyword id="KW-0963">Cytoplasm</keyword>
<keyword id="KW-0418">Kinase</keyword>
<keyword id="KW-0460">Magnesium</keyword>
<keyword id="KW-0479">Metal-binding</keyword>
<keyword id="KW-0547">Nucleotide-binding</keyword>
<keyword id="KW-1185">Reference proteome</keyword>
<keyword id="KW-0808">Transferase</keyword>
<gene>
    <name evidence="1" type="primary">aroK</name>
    <name type="ordered locus">Pro_0128</name>
</gene>
<name>AROK_PROMA</name>
<feature type="chain" id="PRO_0000237908" description="Shikimate kinase">
    <location>
        <begin position="1"/>
        <end position="190"/>
    </location>
</feature>
<feature type="binding site" evidence="1">
    <location>
        <begin position="26"/>
        <end position="31"/>
    </location>
    <ligand>
        <name>ATP</name>
        <dbReference type="ChEBI" id="CHEBI:30616"/>
    </ligand>
</feature>
<feature type="binding site" evidence="1">
    <location>
        <position position="30"/>
    </location>
    <ligand>
        <name>Mg(2+)</name>
        <dbReference type="ChEBI" id="CHEBI:18420"/>
    </ligand>
</feature>
<feature type="binding site" evidence="1">
    <location>
        <position position="48"/>
    </location>
    <ligand>
        <name>substrate</name>
    </ligand>
</feature>
<feature type="binding site" evidence="1">
    <location>
        <position position="72"/>
    </location>
    <ligand>
        <name>substrate</name>
    </ligand>
</feature>
<feature type="binding site" evidence="1">
    <location>
        <position position="94"/>
    </location>
    <ligand>
        <name>substrate</name>
    </ligand>
</feature>
<feature type="binding site" evidence="1">
    <location>
        <position position="133"/>
    </location>
    <ligand>
        <name>ATP</name>
        <dbReference type="ChEBI" id="CHEBI:30616"/>
    </ligand>
</feature>
<feature type="binding site" evidence="1">
    <location>
        <position position="152"/>
    </location>
    <ligand>
        <name>substrate</name>
    </ligand>
</feature>
<comment type="function">
    <text evidence="1">Catalyzes the specific phosphorylation of the 3-hydroxyl group of shikimic acid using ATP as a cosubstrate.</text>
</comment>
<comment type="catalytic activity">
    <reaction evidence="1">
        <text>shikimate + ATP = 3-phosphoshikimate + ADP + H(+)</text>
        <dbReference type="Rhea" id="RHEA:13121"/>
        <dbReference type="ChEBI" id="CHEBI:15378"/>
        <dbReference type="ChEBI" id="CHEBI:30616"/>
        <dbReference type="ChEBI" id="CHEBI:36208"/>
        <dbReference type="ChEBI" id="CHEBI:145989"/>
        <dbReference type="ChEBI" id="CHEBI:456216"/>
        <dbReference type="EC" id="2.7.1.71"/>
    </reaction>
</comment>
<comment type="cofactor">
    <cofactor evidence="1">
        <name>Mg(2+)</name>
        <dbReference type="ChEBI" id="CHEBI:18420"/>
    </cofactor>
    <text evidence="1">Binds 1 Mg(2+) ion per subunit.</text>
</comment>
<comment type="pathway">
    <text evidence="1">Metabolic intermediate biosynthesis; chorismate biosynthesis; chorismate from D-erythrose 4-phosphate and phosphoenolpyruvate: step 5/7.</text>
</comment>
<comment type="subunit">
    <text evidence="1">Monomer.</text>
</comment>
<comment type="subcellular location">
    <subcellularLocation>
        <location evidence="1">Cytoplasm</location>
    </subcellularLocation>
</comment>
<comment type="similarity">
    <text evidence="1">Belongs to the shikimate kinase family.</text>
</comment>
<evidence type="ECO:0000255" key="1">
    <source>
        <dbReference type="HAMAP-Rule" id="MF_00109"/>
    </source>
</evidence>
<sequence length="190" mass="21555">MTYKLRPNQVIKKLGGRIIYLVGMMGSGKSTTGPHLAKLLKYSFIDQDELIEKVAKSSVSQIFREEGENGFRDIETQVLKQIGQRHSLVVATGGGLVTRSENWGVLHQGIVIWLDPNRELLFARLKSDKTVVRPLLDNKDPKDVLDSLIKQRYLSYAEADLHISIERETPEEVALVIFKKLSEIIRVQED</sequence>
<reference key="1">
    <citation type="journal article" date="2003" name="Proc. Natl. Acad. Sci. U.S.A.">
        <title>Genome sequence of the cyanobacterium Prochlorococcus marinus SS120, a nearly minimal oxyphototrophic genome.</title>
        <authorList>
            <person name="Dufresne A."/>
            <person name="Salanoubat M."/>
            <person name="Partensky F."/>
            <person name="Artiguenave F."/>
            <person name="Axmann I.M."/>
            <person name="Barbe V."/>
            <person name="Duprat S."/>
            <person name="Galperin M.Y."/>
            <person name="Koonin E.V."/>
            <person name="Le Gall F."/>
            <person name="Makarova K.S."/>
            <person name="Ostrowski M."/>
            <person name="Oztas S."/>
            <person name="Robert C."/>
            <person name="Rogozin I.B."/>
            <person name="Scanlan D.J."/>
            <person name="Tandeau de Marsac N."/>
            <person name="Weissenbach J."/>
            <person name="Wincker P."/>
            <person name="Wolf Y.I."/>
            <person name="Hess W.R."/>
        </authorList>
    </citation>
    <scope>NUCLEOTIDE SEQUENCE [LARGE SCALE GENOMIC DNA]</scope>
    <source>
        <strain>SARG / CCMP1375 / SS120</strain>
    </source>
</reference>